<reference key="1">
    <citation type="journal article" date="2010" name="Genome Biol. Evol.">
        <title>Continuing evolution of Burkholderia mallei through genome reduction and large-scale rearrangements.</title>
        <authorList>
            <person name="Losada L."/>
            <person name="Ronning C.M."/>
            <person name="DeShazer D."/>
            <person name="Woods D."/>
            <person name="Fedorova N."/>
            <person name="Kim H.S."/>
            <person name="Shabalina S.A."/>
            <person name="Pearson T.R."/>
            <person name="Brinkac L."/>
            <person name="Tan P."/>
            <person name="Nandi T."/>
            <person name="Crabtree J."/>
            <person name="Badger J."/>
            <person name="Beckstrom-Sternberg S."/>
            <person name="Saqib M."/>
            <person name="Schutzer S.E."/>
            <person name="Keim P."/>
            <person name="Nierman W.C."/>
        </authorList>
    </citation>
    <scope>NUCLEOTIDE SEQUENCE [LARGE SCALE GENOMIC DNA]</scope>
    <source>
        <strain>NCTC 10247</strain>
    </source>
</reference>
<protein>
    <recommendedName>
        <fullName evidence="1">Small ribosomal subunit protein uS13</fullName>
    </recommendedName>
    <alternativeName>
        <fullName evidence="3">30S ribosomal protein S13</fullName>
    </alternativeName>
</protein>
<organism>
    <name type="scientific">Burkholderia mallei (strain NCTC 10247)</name>
    <dbReference type="NCBI Taxonomy" id="320389"/>
    <lineage>
        <taxon>Bacteria</taxon>
        <taxon>Pseudomonadati</taxon>
        <taxon>Pseudomonadota</taxon>
        <taxon>Betaproteobacteria</taxon>
        <taxon>Burkholderiales</taxon>
        <taxon>Burkholderiaceae</taxon>
        <taxon>Burkholderia</taxon>
        <taxon>pseudomallei group</taxon>
    </lineage>
</organism>
<proteinExistence type="inferred from homology"/>
<sequence>MARIAGVNIPNHQHTEIGLTAIFGIGRTRARSICVASGVAFSKKVKDLTDADLEKLREEVGKFVVEGDLRREVTMNIKRLMDLGCYRGVRHRKGLPLRGQRTRTNARTRKGPRRAAQALKK</sequence>
<comment type="function">
    <text evidence="1">Located at the top of the head of the 30S subunit, it contacts several helices of the 16S rRNA. In the 70S ribosome it contacts the 23S rRNA (bridge B1a) and protein L5 of the 50S subunit (bridge B1b), connecting the 2 subunits; these bridges are implicated in subunit movement. Contacts the tRNAs in the A and P-sites.</text>
</comment>
<comment type="subunit">
    <text evidence="1">Part of the 30S ribosomal subunit. Forms a loose heterodimer with protein S19. Forms two bridges to the 50S subunit in the 70S ribosome.</text>
</comment>
<comment type="similarity">
    <text evidence="1">Belongs to the universal ribosomal protein uS13 family.</text>
</comment>
<evidence type="ECO:0000255" key="1">
    <source>
        <dbReference type="HAMAP-Rule" id="MF_01315"/>
    </source>
</evidence>
<evidence type="ECO:0000256" key="2">
    <source>
        <dbReference type="SAM" id="MobiDB-lite"/>
    </source>
</evidence>
<evidence type="ECO:0000305" key="3"/>
<accession>A3MRX7</accession>
<keyword id="KW-0687">Ribonucleoprotein</keyword>
<keyword id="KW-0689">Ribosomal protein</keyword>
<keyword id="KW-0694">RNA-binding</keyword>
<keyword id="KW-0699">rRNA-binding</keyword>
<keyword id="KW-0820">tRNA-binding</keyword>
<feature type="chain" id="PRO_1000051867" description="Small ribosomal subunit protein uS13">
    <location>
        <begin position="1"/>
        <end position="121"/>
    </location>
</feature>
<feature type="region of interest" description="Disordered" evidence="2">
    <location>
        <begin position="94"/>
        <end position="121"/>
    </location>
</feature>
<gene>
    <name evidence="1" type="primary">rpsM</name>
    <name type="ordered locus">BMA10247_3501</name>
</gene>
<dbReference type="EMBL" id="CP000548">
    <property type="protein sequence ID" value="ABO06568.1"/>
    <property type="molecule type" value="Genomic_DNA"/>
</dbReference>
<dbReference type="RefSeq" id="WP_004197938.1">
    <property type="nucleotide sequence ID" value="NZ_CP007802.1"/>
</dbReference>
<dbReference type="SMR" id="A3MRX7"/>
<dbReference type="GeneID" id="93061809"/>
<dbReference type="KEGG" id="bmaz:BM44_3018"/>
<dbReference type="KEGG" id="bmn:BMA10247_3501"/>
<dbReference type="PATRIC" id="fig|320389.8.peg.3390"/>
<dbReference type="GO" id="GO:0005829">
    <property type="term" value="C:cytosol"/>
    <property type="evidence" value="ECO:0007669"/>
    <property type="project" value="TreeGrafter"/>
</dbReference>
<dbReference type="GO" id="GO:0015935">
    <property type="term" value="C:small ribosomal subunit"/>
    <property type="evidence" value="ECO:0007669"/>
    <property type="project" value="TreeGrafter"/>
</dbReference>
<dbReference type="GO" id="GO:0019843">
    <property type="term" value="F:rRNA binding"/>
    <property type="evidence" value="ECO:0007669"/>
    <property type="project" value="UniProtKB-UniRule"/>
</dbReference>
<dbReference type="GO" id="GO:0003735">
    <property type="term" value="F:structural constituent of ribosome"/>
    <property type="evidence" value="ECO:0007669"/>
    <property type="project" value="InterPro"/>
</dbReference>
<dbReference type="GO" id="GO:0000049">
    <property type="term" value="F:tRNA binding"/>
    <property type="evidence" value="ECO:0007669"/>
    <property type="project" value="UniProtKB-UniRule"/>
</dbReference>
<dbReference type="GO" id="GO:0006412">
    <property type="term" value="P:translation"/>
    <property type="evidence" value="ECO:0007669"/>
    <property type="project" value="UniProtKB-UniRule"/>
</dbReference>
<dbReference type="FunFam" id="1.10.8.50:FF:000001">
    <property type="entry name" value="30S ribosomal protein S13"/>
    <property type="match status" value="1"/>
</dbReference>
<dbReference type="FunFam" id="4.10.910.10:FF:000001">
    <property type="entry name" value="30S ribosomal protein S13"/>
    <property type="match status" value="1"/>
</dbReference>
<dbReference type="Gene3D" id="1.10.8.50">
    <property type="match status" value="1"/>
</dbReference>
<dbReference type="Gene3D" id="4.10.910.10">
    <property type="entry name" value="30s ribosomal protein s13, domain 2"/>
    <property type="match status" value="1"/>
</dbReference>
<dbReference type="HAMAP" id="MF_01315">
    <property type="entry name" value="Ribosomal_uS13"/>
    <property type="match status" value="1"/>
</dbReference>
<dbReference type="InterPro" id="IPR027437">
    <property type="entry name" value="Rbsml_uS13_C"/>
</dbReference>
<dbReference type="InterPro" id="IPR001892">
    <property type="entry name" value="Ribosomal_uS13"/>
</dbReference>
<dbReference type="InterPro" id="IPR010979">
    <property type="entry name" value="Ribosomal_uS13-like_H2TH"/>
</dbReference>
<dbReference type="InterPro" id="IPR019980">
    <property type="entry name" value="Ribosomal_uS13_bac-type"/>
</dbReference>
<dbReference type="InterPro" id="IPR018269">
    <property type="entry name" value="Ribosomal_uS13_CS"/>
</dbReference>
<dbReference type="NCBIfam" id="TIGR03631">
    <property type="entry name" value="uS13_bact"/>
    <property type="match status" value="1"/>
</dbReference>
<dbReference type="PANTHER" id="PTHR10871">
    <property type="entry name" value="30S RIBOSOMAL PROTEIN S13/40S RIBOSOMAL PROTEIN S18"/>
    <property type="match status" value="1"/>
</dbReference>
<dbReference type="PANTHER" id="PTHR10871:SF1">
    <property type="entry name" value="SMALL RIBOSOMAL SUBUNIT PROTEIN US13M"/>
    <property type="match status" value="1"/>
</dbReference>
<dbReference type="Pfam" id="PF00416">
    <property type="entry name" value="Ribosomal_S13"/>
    <property type="match status" value="1"/>
</dbReference>
<dbReference type="PIRSF" id="PIRSF002134">
    <property type="entry name" value="Ribosomal_S13"/>
    <property type="match status" value="1"/>
</dbReference>
<dbReference type="SUPFAM" id="SSF46946">
    <property type="entry name" value="S13-like H2TH domain"/>
    <property type="match status" value="1"/>
</dbReference>
<dbReference type="PROSITE" id="PS00646">
    <property type="entry name" value="RIBOSOMAL_S13_1"/>
    <property type="match status" value="1"/>
</dbReference>
<dbReference type="PROSITE" id="PS50159">
    <property type="entry name" value="RIBOSOMAL_S13_2"/>
    <property type="match status" value="1"/>
</dbReference>
<name>RS13_BURM7</name>